<organism>
    <name type="scientific">Mus musculus</name>
    <name type="common">Mouse</name>
    <dbReference type="NCBI Taxonomy" id="10090"/>
    <lineage>
        <taxon>Eukaryota</taxon>
        <taxon>Metazoa</taxon>
        <taxon>Chordata</taxon>
        <taxon>Craniata</taxon>
        <taxon>Vertebrata</taxon>
        <taxon>Euteleostomi</taxon>
        <taxon>Mammalia</taxon>
        <taxon>Eutheria</taxon>
        <taxon>Euarchontoglires</taxon>
        <taxon>Glires</taxon>
        <taxon>Rodentia</taxon>
        <taxon>Myomorpha</taxon>
        <taxon>Muroidea</taxon>
        <taxon>Muridae</taxon>
        <taxon>Murinae</taxon>
        <taxon>Mus</taxon>
        <taxon>Mus</taxon>
    </lineage>
</organism>
<gene>
    <name type="primary">Sv2c</name>
    <name type="synonym">Kiaa1054</name>
</gene>
<keyword id="KW-0968">Cytoplasmic vesicle</keyword>
<keyword id="KW-0325">Glycoprotein</keyword>
<keyword id="KW-0472">Membrane</keyword>
<keyword id="KW-0532">Neurotransmitter transport</keyword>
<keyword id="KW-0597">Phosphoprotein</keyword>
<keyword id="KW-0675">Receptor</keyword>
<keyword id="KW-1185">Reference proteome</keyword>
<keyword id="KW-0770">Synapse</keyword>
<keyword id="KW-0812">Transmembrane</keyword>
<keyword id="KW-1133">Transmembrane helix</keyword>
<keyword id="KW-0813">Transport</keyword>
<comment type="function">
    <text evidence="4">Plays a role in the control of regulated secretion in neural and endocrine cells, enhancing selectively low-frequency neurotransmission. Positively regulates vesicle fusion by maintaining the readily releasable pool of secretory vesicles.</text>
</comment>
<comment type="function">
    <text evidence="9 10">(Microbial infection) Receptor for C.botulinum neurotoxin type A (BoNT/A, botA); the toxin binds Sv2c via extracellular loop 4 (PubMed:16543415).</text>
</comment>
<comment type="function">
    <text evidence="12">(Microbial infection) Possible receptor for C.botulinum neurotoxin type D (BoNT/D, botD) (PubMed:21483489).</text>
</comment>
<comment type="subunit">
    <text evidence="4">Interacts with SYT1 in a calcium-dependent manner.</text>
</comment>
<comment type="subunit">
    <text evidence="10 15">(Microbial infection) Interacts with C.botulinum neurotoxin type A (BoNT/A, botA).</text>
</comment>
<comment type="subunit">
    <text evidence="12">(Microbial infection) Interacts with C.botulinum neurotoxin type D (BoNT/D, botD).</text>
</comment>
<comment type="interaction">
    <interactant intactId="EBI-36944762">
        <id>Q69ZS6</id>
    </interactant>
    <interactant intactId="EBI-2310271">
        <id>O55042</id>
        <label>Snca</label>
    </interactant>
    <organismsDiffer>false</organismsDiffer>
    <experiments>2</experiments>
</comment>
<comment type="subcellular location">
    <subcellularLocation>
        <location evidence="4">Cytoplasmic vesicle</location>
        <location evidence="4">Secretory vesicle</location>
        <location evidence="4">Synaptic vesicle membrane</location>
        <topology evidence="4">Multi-pass membrane protein</topology>
    </subcellularLocation>
    <text evidence="4">Enriched in small synaptic vesicles and adrenal microsomes, not present in chromaffin granules. Associated with both insulin granules and synaptic-like microvesicles in insulin-secreting cells of the pancreas.</text>
</comment>
<comment type="tissue specificity">
    <text evidence="8 9 11 12">Expressed in specific subsets of conventional synapses in the retina (at protein level) (PubMed:12687700). Expressed in diaphragm motor nerve terminals (at protein level) (PubMed:16543415). Expressed in a subset of hippocampus neurons (at protein level) (PubMed:18815274, PubMed:21483489).</text>
</comment>
<comment type="developmental stage">
    <text evidence="8">Expressed during synaptogenesis in the retina (at protein level).</text>
</comment>
<comment type="induction">
    <text evidence="7">Up-regulated upon Sv2a depletion.</text>
</comment>
<comment type="PTM">
    <text evidence="4">N-glycosylated.</text>
</comment>
<comment type="disruption phenotype">
    <text evidence="9">Small interfering RNA knockdown of the protein in Neuro-2a cells (which only express this SV2 protein) prevents uptake of C.botulinum neurotoxin type A (BoNT/A, botA); uptake is restored by expression of rat SV2A or SV2B (PubMed:16543415).</text>
</comment>
<comment type="similarity">
    <text evidence="14">Belongs to the major facilitator superfamily.</text>
</comment>
<comment type="caution">
    <text evidence="12 13">The use of this protein as a coreceptor for C.botulinum type D (BoNT/D, botD) is controversial. In double SV2A/SV2B knockout mice BoNT/D does not degrade its synaptobrevin target; introducing SV2A, SV2B or SV2C restores target cleavage (PubMed:21483489). However another group does not find a convincing interaction with SV2 (PubMed:21632541).</text>
</comment>
<comment type="sequence caution" evidence="14">
    <conflict type="erroneous initiation">
        <sequence resource="EMBL-CDS" id="BAD32370"/>
    </conflict>
    <text>Extended N-terminus.</text>
</comment>
<feature type="chain" id="PRO_0000239772" description="Synaptic vesicle glycoprotein 2C">
    <location>
        <begin position="1"/>
        <end position="727"/>
    </location>
</feature>
<feature type="topological domain" description="Cytoplasmic" evidence="5">
    <location>
        <begin position="1"/>
        <end position="154"/>
    </location>
</feature>
<feature type="transmembrane region" description="Helical" evidence="5">
    <location>
        <begin position="155"/>
        <end position="175"/>
    </location>
</feature>
<feature type="topological domain" description="Extracellular" evidence="5">
    <location>
        <begin position="176"/>
        <end position="191"/>
    </location>
</feature>
<feature type="transmembrane region" description="Helical" evidence="5">
    <location>
        <begin position="192"/>
        <end position="212"/>
    </location>
</feature>
<feature type="topological domain" description="Cytoplasmic" evidence="5">
    <location>
        <begin position="213"/>
        <end position="226"/>
    </location>
</feature>
<feature type="transmembrane region" description="Helical" evidence="5">
    <location>
        <begin position="227"/>
        <end position="247"/>
    </location>
</feature>
<feature type="topological domain" description="Extracellular" evidence="5">
    <location>
        <position position="248"/>
    </location>
</feature>
<feature type="transmembrane region" description="Helical" evidence="5">
    <location>
        <begin position="249"/>
        <end position="269"/>
    </location>
</feature>
<feature type="topological domain" description="Cytoplasmic" evidence="5">
    <location>
        <begin position="270"/>
        <end position="280"/>
    </location>
</feature>
<feature type="transmembrane region" description="Helical" evidence="5">
    <location>
        <begin position="281"/>
        <end position="301"/>
    </location>
</feature>
<feature type="topological domain" description="Extracellular" evidence="5">
    <location>
        <begin position="302"/>
        <end position="320"/>
    </location>
</feature>
<feature type="transmembrane region" description="Helical" evidence="5">
    <location>
        <begin position="321"/>
        <end position="341"/>
    </location>
</feature>
<feature type="topological domain" description="Cytoplasmic" evidence="5">
    <location>
        <begin position="342"/>
        <end position="437"/>
    </location>
</feature>
<feature type="transmembrane region" description="Helical" evidence="5">
    <location>
        <begin position="438"/>
        <end position="458"/>
    </location>
</feature>
<feature type="topological domain" description="Extracellular" evidence="5 15 16">
    <location>
        <begin position="459"/>
        <end position="578"/>
    </location>
</feature>
<feature type="transmembrane region" description="Helical" evidence="5">
    <location>
        <begin position="579"/>
        <end position="599"/>
    </location>
</feature>
<feature type="topological domain" description="Cytoplasmic" evidence="5">
    <location>
        <begin position="600"/>
        <end position="609"/>
    </location>
</feature>
<feature type="transmembrane region" description="Helical" evidence="5">
    <location>
        <begin position="610"/>
        <end position="630"/>
    </location>
</feature>
<feature type="topological domain" description="Extracellular" evidence="5">
    <location>
        <begin position="631"/>
        <end position="636"/>
    </location>
</feature>
<feature type="transmembrane region" description="Helical" evidence="5">
    <location>
        <begin position="637"/>
        <end position="657"/>
    </location>
</feature>
<feature type="topological domain" description="Cytoplasmic" evidence="5">
    <location>
        <begin position="658"/>
        <end position="670"/>
    </location>
</feature>
<feature type="transmembrane region" description="Helical" evidence="5">
    <location>
        <begin position="671"/>
        <end position="693"/>
    </location>
</feature>
<feature type="topological domain" description="Extracellular" evidence="5">
    <location>
        <begin position="694"/>
        <end position="697"/>
    </location>
</feature>
<feature type="transmembrane region" description="Helical" evidence="5">
    <location>
        <begin position="698"/>
        <end position="716"/>
    </location>
</feature>
<feature type="topological domain" description="Cytoplasmic" evidence="5">
    <location>
        <begin position="717"/>
        <end position="727"/>
    </location>
</feature>
<feature type="region of interest" description="Interaction with SYT1" evidence="1">
    <location>
        <begin position="1"/>
        <end position="57"/>
    </location>
</feature>
<feature type="region of interest" description="Disordered" evidence="6">
    <location>
        <begin position="22"/>
        <end position="128"/>
    </location>
</feature>
<feature type="compositionally biased region" description="Basic and acidic residues" evidence="6">
    <location>
        <begin position="113"/>
        <end position="128"/>
    </location>
</feature>
<feature type="modified residue" description="Phosphoserine" evidence="2">
    <location>
        <position position="75"/>
    </location>
</feature>
<feature type="modified residue" description="Phosphoserine" evidence="2">
    <location>
        <position position="76"/>
    </location>
</feature>
<feature type="modified residue" description="Phosphothreonine" evidence="2">
    <location>
        <position position="79"/>
    </location>
</feature>
<feature type="modified residue" description="Phosphotyrosine" evidence="3">
    <location>
        <position position="466"/>
    </location>
</feature>
<feature type="glycosylation site" description="N-linked (GlcNAc...) asparagine" evidence="5">
    <location>
        <position position="480"/>
    </location>
</feature>
<feature type="glycosylation site" description="N-linked (GlcNAc...) asparagine" evidence="5">
    <location>
        <position position="484"/>
    </location>
</feature>
<feature type="glycosylation site" description="N-linked (GlcNAc...) asparagine" evidence="5">
    <location>
        <position position="534"/>
    </location>
</feature>
<feature type="glycosylation site" description="N-linked (GlcNAc...) asparagine" evidence="5">
    <location>
        <position position="559"/>
    </location>
</feature>
<feature type="glycosylation site" description="N-linked (GlcNAc...) asparagine" evidence="5">
    <location>
        <position position="565"/>
    </location>
</feature>
<accession>Q69ZS6</accession>
<proteinExistence type="evidence at protein level"/>
<protein>
    <recommendedName>
        <fullName>Synaptic vesicle glycoprotein 2C</fullName>
        <shortName>Synaptic vesicle protein 2C</shortName>
    </recommendedName>
</protein>
<sequence>MEDSYKDRTSLMKGAKDIAKEVKKQTVKKVNQAVDRAQDEYTQRSYSRFQDEEDDDDYYPPGETYSGEVNDDEGSSEATEGHDEEDEIYEGEYQGIPSTNQGKDSIVSVGQPKGDEYKDRRELESERRADEEELAQQYELIIQECGHGRFQWALFFVLGMALMADGVEVFVVGFVLPSAETDLCIPNSGSGWLGSIVYLGMMVGAFFWGGLADKVGRKQSLLICMSVNGFFAFLSSFVQGYGFFLVCRLLSGFGIGGAIPTVFSYFAEVLAREKRGEHLSWLCMFWMIGGIYASAMAWAIIPHYGWSFSMGSAYQFHSWRVFVIVCALPCVSSVVALTFMPESPRFLLEVGKHDEAWMILKLIHDTNMRARGQPEKVFTVNKIKTPKQIDELIEIESDTGTWYRRCFVRIRTELYGIWLTFMRCFNYPVRENTIKLTIVWFTLSFGYYGLSVWFPDVIKHLQSDEYALLTRNVQKDKYANFSINFTMENQIHTGMEYENGRFLGVKFKSVTFKDSVFKSCTFDDVTSVNTYFKNCTFIDTLFDNTDFEPYKFIDSEFQNCSFLHNKTGCQITFDDDYSAYWIYFVNFLGTLAVLPGNIVSALLMDRIGRLTMLGGSMVLSGISCFFLWFGTSESMMIGMLCLYNGLTISAWNSLDVVTVELYPTDRRATGFGFLNALCKAAAVLGNLIFGSLVSITKAIPILLASTVLVCGGLVGLRLPDTRTQVLM</sequence>
<evidence type="ECO:0000250" key="1"/>
<evidence type="ECO:0000250" key="2">
    <source>
        <dbReference type="UniProtKB" id="Q7L0J3"/>
    </source>
</evidence>
<evidence type="ECO:0000250" key="3">
    <source>
        <dbReference type="UniProtKB" id="Q9JIS5"/>
    </source>
</evidence>
<evidence type="ECO:0000250" key="4">
    <source>
        <dbReference type="UniProtKB" id="Q9Z2I6"/>
    </source>
</evidence>
<evidence type="ECO:0000255" key="5"/>
<evidence type="ECO:0000256" key="6">
    <source>
        <dbReference type="SAM" id="MobiDB-lite"/>
    </source>
</evidence>
<evidence type="ECO:0000269" key="7">
    <source>
    </source>
</evidence>
<evidence type="ECO:0000269" key="8">
    <source>
    </source>
</evidence>
<evidence type="ECO:0000269" key="9">
    <source>
    </source>
</evidence>
<evidence type="ECO:0000269" key="10">
    <source>
    </source>
</evidence>
<evidence type="ECO:0000269" key="11">
    <source>
    </source>
</evidence>
<evidence type="ECO:0000269" key="12">
    <source>
    </source>
</evidence>
<evidence type="ECO:0000269" key="13">
    <source>
    </source>
</evidence>
<evidence type="ECO:0000305" key="14"/>
<evidence type="ECO:0000305" key="15">
    <source>
    </source>
</evidence>
<evidence type="ECO:0000305" key="16">
    <source>
    </source>
</evidence>
<dbReference type="EMBL" id="AK173092">
    <property type="protein sequence ID" value="BAD32370.1"/>
    <property type="status" value="ALT_INIT"/>
    <property type="molecule type" value="mRNA"/>
</dbReference>
<dbReference type="CCDS" id="CCDS49333.1"/>
<dbReference type="RefSeq" id="NP_083486.1">
    <property type="nucleotide sequence ID" value="NM_029210.1"/>
</dbReference>
<dbReference type="RefSeq" id="XP_036014095.1">
    <property type="nucleotide sequence ID" value="XM_036158202.1"/>
</dbReference>
<dbReference type="SMR" id="Q69ZS6"/>
<dbReference type="BioGRID" id="217304">
    <property type="interactions" value="4"/>
</dbReference>
<dbReference type="FunCoup" id="Q69ZS6">
    <property type="interactions" value="237"/>
</dbReference>
<dbReference type="IntAct" id="Q69ZS6">
    <property type="interactions" value="2"/>
</dbReference>
<dbReference type="MINT" id="Q69ZS6"/>
<dbReference type="STRING" id="10090.ENSMUSP00000124473"/>
<dbReference type="GlyConnect" id="2747">
    <property type="glycosylation" value="1 N-Linked glycan (1 site)"/>
</dbReference>
<dbReference type="GlyCosmos" id="Q69ZS6">
    <property type="glycosylation" value="5 sites, 1 glycan"/>
</dbReference>
<dbReference type="GlyGen" id="Q69ZS6">
    <property type="glycosylation" value="6 sites, 3 N-linked glycans (2 sites), 1 O-linked glycan (1 site)"/>
</dbReference>
<dbReference type="iPTMnet" id="Q69ZS6"/>
<dbReference type="PhosphoSitePlus" id="Q69ZS6"/>
<dbReference type="PaxDb" id="10090-ENSMUSP00000124473"/>
<dbReference type="ProteomicsDB" id="258677"/>
<dbReference type="Antibodypedia" id="24435">
    <property type="antibodies" value="126 antibodies from 24 providers"/>
</dbReference>
<dbReference type="Ensembl" id="ENSMUST00000161263.8">
    <property type="protein sequence ID" value="ENSMUSP00000124473.2"/>
    <property type="gene ID" value="ENSMUSG00000051111.17"/>
</dbReference>
<dbReference type="GeneID" id="75209"/>
<dbReference type="KEGG" id="mmu:75209"/>
<dbReference type="UCSC" id="uc007rmt.2">
    <property type="organism name" value="mouse"/>
</dbReference>
<dbReference type="AGR" id="MGI:1922459"/>
<dbReference type="CTD" id="22987"/>
<dbReference type="MGI" id="MGI:1922459">
    <property type="gene designation" value="Sv2c"/>
</dbReference>
<dbReference type="VEuPathDB" id="HostDB:ENSMUSG00000051111"/>
<dbReference type="eggNOG" id="KOG0255">
    <property type="taxonomic scope" value="Eukaryota"/>
</dbReference>
<dbReference type="GeneTree" id="ENSGT00950000182940"/>
<dbReference type="InParanoid" id="Q69ZS6"/>
<dbReference type="OMA" id="HDEYKDR"/>
<dbReference type="OrthoDB" id="433512at2759"/>
<dbReference type="PhylomeDB" id="Q69ZS6"/>
<dbReference type="TreeFam" id="TF324824"/>
<dbReference type="BioGRID-ORCS" id="75209">
    <property type="hits" value="2 hits in 79 CRISPR screens"/>
</dbReference>
<dbReference type="ChiTaRS" id="Sv2c">
    <property type="organism name" value="mouse"/>
</dbReference>
<dbReference type="PRO" id="PR:Q69ZS6"/>
<dbReference type="Proteomes" id="UP000000589">
    <property type="component" value="Chromosome 13"/>
</dbReference>
<dbReference type="RNAct" id="Q69ZS6">
    <property type="molecule type" value="protein"/>
</dbReference>
<dbReference type="Bgee" id="ENSMUSG00000051111">
    <property type="expression patterns" value="Expressed in superior frontal gyrus and 66 other cell types or tissues"/>
</dbReference>
<dbReference type="ExpressionAtlas" id="Q69ZS6">
    <property type="expression patterns" value="baseline and differential"/>
</dbReference>
<dbReference type="GO" id="GO:0098691">
    <property type="term" value="C:dopaminergic synapse"/>
    <property type="evidence" value="ECO:0000314"/>
    <property type="project" value="SynGO"/>
</dbReference>
<dbReference type="GO" id="GO:0008021">
    <property type="term" value="C:synaptic vesicle"/>
    <property type="evidence" value="ECO:0000314"/>
    <property type="project" value="MGI"/>
</dbReference>
<dbReference type="GO" id="GO:0030672">
    <property type="term" value="C:synaptic vesicle membrane"/>
    <property type="evidence" value="ECO:0007669"/>
    <property type="project" value="UniProtKB-SubCell"/>
</dbReference>
<dbReference type="GO" id="GO:0022857">
    <property type="term" value="F:transmembrane transporter activity"/>
    <property type="evidence" value="ECO:0007669"/>
    <property type="project" value="InterPro"/>
</dbReference>
<dbReference type="GO" id="GO:0007268">
    <property type="term" value="P:chemical synaptic transmission"/>
    <property type="evidence" value="ECO:0000304"/>
    <property type="project" value="MGI"/>
</dbReference>
<dbReference type="GO" id="GO:0006836">
    <property type="term" value="P:neurotransmitter transport"/>
    <property type="evidence" value="ECO:0007669"/>
    <property type="project" value="UniProtKB-KW"/>
</dbReference>
<dbReference type="GO" id="GO:2000300">
    <property type="term" value="P:regulation of synaptic vesicle exocytosis"/>
    <property type="evidence" value="ECO:0000314"/>
    <property type="project" value="SynGO"/>
</dbReference>
<dbReference type="CDD" id="cd17440">
    <property type="entry name" value="MFS_SV2C"/>
    <property type="match status" value="1"/>
</dbReference>
<dbReference type="FunFam" id="1.20.1250.20:FF:000009">
    <property type="entry name" value="Synaptic vesicle glycoprotein 2A"/>
    <property type="match status" value="1"/>
</dbReference>
<dbReference type="FunFam" id="1.20.1250.20:FF:000721">
    <property type="entry name" value="Synaptic vesicle glycoprotein 2C"/>
    <property type="match status" value="1"/>
</dbReference>
<dbReference type="FunFam" id="2.160.20.80:FF:000010">
    <property type="entry name" value="Synaptic vesicle glycoprotein 2C"/>
    <property type="match status" value="1"/>
</dbReference>
<dbReference type="Gene3D" id="2.160.20.80">
    <property type="entry name" value="E3 ubiquitin-protein ligase SopA"/>
    <property type="match status" value="1"/>
</dbReference>
<dbReference type="Gene3D" id="1.20.1250.20">
    <property type="entry name" value="MFS general substrate transporter like domains"/>
    <property type="match status" value="2"/>
</dbReference>
<dbReference type="InterPro" id="IPR055415">
    <property type="entry name" value="LD_SV2"/>
</dbReference>
<dbReference type="InterPro" id="IPR011701">
    <property type="entry name" value="MFS"/>
</dbReference>
<dbReference type="InterPro" id="IPR020846">
    <property type="entry name" value="MFS_dom"/>
</dbReference>
<dbReference type="InterPro" id="IPR005828">
    <property type="entry name" value="MFS_sugar_transport-like"/>
</dbReference>
<dbReference type="InterPro" id="IPR036259">
    <property type="entry name" value="MFS_trans_sf"/>
</dbReference>
<dbReference type="InterPro" id="IPR005829">
    <property type="entry name" value="Sugar_transporter_CS"/>
</dbReference>
<dbReference type="InterPro" id="IPR022308">
    <property type="entry name" value="SV2"/>
</dbReference>
<dbReference type="NCBIfam" id="TIGR01299">
    <property type="entry name" value="synapt_SV2"/>
    <property type="match status" value="1"/>
</dbReference>
<dbReference type="PANTHER" id="PTHR23511">
    <property type="entry name" value="SYNAPTIC VESICLE GLYCOPROTEIN 2"/>
    <property type="match status" value="1"/>
</dbReference>
<dbReference type="PANTHER" id="PTHR23511:SF6">
    <property type="entry name" value="SYNAPTIC VESICLE GLYCOPROTEIN 2C"/>
    <property type="match status" value="1"/>
</dbReference>
<dbReference type="Pfam" id="PF23894">
    <property type="entry name" value="LD_SV2"/>
    <property type="match status" value="1"/>
</dbReference>
<dbReference type="Pfam" id="PF07690">
    <property type="entry name" value="MFS_1"/>
    <property type="match status" value="1"/>
</dbReference>
<dbReference type="Pfam" id="PF00083">
    <property type="entry name" value="Sugar_tr"/>
    <property type="match status" value="1"/>
</dbReference>
<dbReference type="SUPFAM" id="SSF103473">
    <property type="entry name" value="MFS general substrate transporter"/>
    <property type="match status" value="2"/>
</dbReference>
<dbReference type="SUPFAM" id="SSF141571">
    <property type="entry name" value="Pentapeptide repeat-like"/>
    <property type="match status" value="1"/>
</dbReference>
<dbReference type="PROSITE" id="PS50850">
    <property type="entry name" value="MFS"/>
    <property type="match status" value="1"/>
</dbReference>
<name>SV2C_MOUSE</name>
<reference key="1">
    <citation type="journal article" date="2004" name="DNA Res.">
        <title>Prediction of the coding sequences of mouse homologues of KIAA gene: IV. The complete nucleotide sequences of 500 mouse KIAA-homologous cDNAs identified by screening of terminal sequences of cDNA clones randomly sampled from size-fractionated libraries.</title>
        <authorList>
            <person name="Okazaki N."/>
            <person name="Kikuno R."/>
            <person name="Ohara R."/>
            <person name="Inamoto S."/>
            <person name="Koseki H."/>
            <person name="Hiraoka S."/>
            <person name="Saga Y."/>
            <person name="Seino S."/>
            <person name="Nishimura M."/>
            <person name="Kaisho T."/>
            <person name="Hoshino K."/>
            <person name="Kitamura H."/>
            <person name="Nagase T."/>
            <person name="Ohara O."/>
            <person name="Koga H."/>
        </authorList>
    </citation>
    <scope>NUCLEOTIDE SEQUENCE [LARGE SCALE MRNA]</scope>
    <source>
        <tissue>Fetal brain</tissue>
    </source>
</reference>
<reference key="2">
    <citation type="journal article" date="2001" name="Nat. Cell Biol.">
        <title>SV2 modulates the size of the readily releasable pool of secretory vesicles.</title>
        <authorList>
            <person name="Xu T."/>
            <person name="Bajjalieh S.M."/>
        </authorList>
    </citation>
    <scope>INDUCTION</scope>
</reference>
<reference key="3">
    <citation type="journal article" date="2003" name="J. Comp. Neurol.">
        <title>Differential distribution and developmental expression of synaptic vesicle protein 2 isoforms in the mouse retina.</title>
        <authorList>
            <person name="Wang M.M."/>
            <person name="Janz R."/>
            <person name="Belizaire R."/>
            <person name="Frishman L.J."/>
            <person name="Sherry D.M."/>
        </authorList>
    </citation>
    <scope>TISSUE SPECIFICITY</scope>
    <scope>DEVELOPMENTAL STAGE</scope>
</reference>
<reference key="4">
    <citation type="journal article" date="2006" name="FEBS Lett.">
        <title>The synaptic vesicle protein 2C mediates the uptake of botulinum neurotoxin A into phrenic nerves.</title>
        <authorList>
            <person name="Mahrhold S."/>
            <person name="Rummel A."/>
            <person name="Bigalke H."/>
            <person name="Davletov B."/>
            <person name="Binz T."/>
        </authorList>
    </citation>
    <scope>FUNCTION AS C.BOTULINUM NEUROTOXIN TYPE A RECEPTOR (MICROBIAL INFECTION)</scope>
    <scope>SUBUNIT (MICROBIAL INFECTION)</scope>
</reference>
<reference key="5">
    <citation type="journal article" date="2006" name="Science">
        <title>SV2 is the protein receptor for botulinum neurotoxin A.</title>
        <authorList>
            <person name="Dong M."/>
            <person name="Yeh F."/>
            <person name="Tepp W.H."/>
            <person name="Dean C."/>
            <person name="Johnson E.A."/>
            <person name="Janz R."/>
            <person name="Chapman E.R."/>
        </authorList>
    </citation>
    <scope>FUNCTION AS BOTULINUM NEUROTOXIN TYPE A RECEPTOR (MICROBIAL INFECTION)</scope>
    <scope>SUBUNIT (MICROBIAL INFECTION)</scope>
    <scope>TISSUE SPECIFICITY</scope>
    <scope>DISRUPTION PHENOTYPE</scope>
</reference>
<reference key="6">
    <citation type="journal article" date="2008" name="Mol. Biol. Cell">
        <title>Glycosylated SV2A and SV2B mediate the entry of botulinum neurotoxin E into neurons.</title>
        <authorList>
            <person name="Dong M."/>
            <person name="Liu H."/>
            <person name="Tepp W.H."/>
            <person name="Johnson E.A."/>
            <person name="Janz R."/>
            <person name="Chapman E.R."/>
        </authorList>
    </citation>
    <scope>NOT A C.BOTULINUM NEUROTOXIN TYPE E RECEPTOR</scope>
    <scope>TISSUE SPECIFICITY</scope>
</reference>
<reference key="7">
    <citation type="journal article" date="2010" name="Cell">
        <title>A tissue-specific atlas of mouse protein phosphorylation and expression.</title>
        <authorList>
            <person name="Huttlin E.L."/>
            <person name="Jedrychowski M.P."/>
            <person name="Elias J.E."/>
            <person name="Goswami T."/>
            <person name="Rad R."/>
            <person name="Beausoleil S.A."/>
            <person name="Villen J."/>
            <person name="Haas W."/>
            <person name="Sowa M.E."/>
            <person name="Gygi S.P."/>
        </authorList>
    </citation>
    <scope>IDENTIFICATION BY MASS SPECTROMETRY [LARGE SCALE ANALYSIS]</scope>
    <source>
        <tissue>Brain</tissue>
    </source>
</reference>
<reference key="8">
    <citation type="journal article" date="2011" name="PLoS Pathog.">
        <title>Botulinum neurotoxin D uses synaptic vesicle protein SV2 and gangliosides as receptors.</title>
        <authorList>
            <person name="Peng L."/>
            <person name="Tepp W.H."/>
            <person name="Johnson E.A."/>
            <person name="Dong M."/>
        </authorList>
    </citation>
    <scope>POSSIBLE FUNCTION AS C.BOTULINUM NEUROTOXIN TYPE D RECEPTOR (MICROBIAL INFECTION)</scope>
    <scope>SUBUNIT (MICROBIAL INFECTION)</scope>
    <scope>TISSUE SPECIFICITY</scope>
</reference>
<reference key="9">
    <citation type="journal article" date="2011" name="J. Biol. Chem.">
        <title>Novel ganglioside-mediated entry of botulinum neurotoxin serotype D into neurons.</title>
        <authorList>
            <person name="Kroken A.R."/>
            <person name="Karalewitz A.P."/>
            <person name="Fu Z."/>
            <person name="Kim J.J."/>
            <person name="Barbieri J.T."/>
        </authorList>
    </citation>
    <scope>NOT RECEPTOR FOR C.BOTULINUM NEUROTOXIN TYPE D (MICROBIAL INFECTION)</scope>
</reference>